<comment type="function">
    <text>The pyruvate dehydrogenase complex catalyzes the overall conversion of pyruvate to acetyl-CoA and CO(2).</text>
</comment>
<comment type="catalytic activity">
    <reaction>
        <text>N(6)-[(R)-lipoyl]-L-lysyl-[protein] + pyruvate + H(+) = N(6)-[(R)-S(8)-acetyldihydrolipoyl]-L-lysyl-[protein] + CO2</text>
        <dbReference type="Rhea" id="RHEA:19189"/>
        <dbReference type="Rhea" id="RHEA-COMP:10474"/>
        <dbReference type="Rhea" id="RHEA-COMP:10478"/>
        <dbReference type="ChEBI" id="CHEBI:15361"/>
        <dbReference type="ChEBI" id="CHEBI:15378"/>
        <dbReference type="ChEBI" id="CHEBI:16526"/>
        <dbReference type="ChEBI" id="CHEBI:83099"/>
        <dbReference type="ChEBI" id="CHEBI:83111"/>
        <dbReference type="EC" id="1.2.4.1"/>
    </reaction>
</comment>
<comment type="cofactor">
    <cofactor evidence="1">
        <name>thiamine diphosphate</name>
        <dbReference type="ChEBI" id="CHEBI:58937"/>
    </cofactor>
    <cofactor evidence="1">
        <name>Mg(2+)</name>
        <dbReference type="ChEBI" id="CHEBI:18420"/>
    </cofactor>
</comment>
<comment type="activity regulation">
    <text>E1 activity is regulated by phosphorylation (inactivation) and dephosphorylation (activation) of the alpha subunit.</text>
</comment>
<comment type="subunit">
    <text>Pyruvate dehydrogenase (E1) is a tetramer of 2 alpha and 2 beta subunits. Eukaryotic pyruvate dehydrogenase (PDH) complexes are organized as a core consisting of the oligomeric dihydrolipoamide acetyl-transferase (E2), around which are arranged multiple copies of pyruvate dehydrogenase (E1), dihydrolipoamide dehydrogenase (E3) and protein X (E3BP) bound by non-covalent bonds.</text>
</comment>
<comment type="subcellular location">
    <subcellularLocation>
        <location>Mitochondrion matrix</location>
    </subcellularLocation>
</comment>
<comment type="PTM">
    <text evidence="3">Phosphorylated at Ser-313 by pyruvate dehydrogenase kinases PKP1 (PDK1) and PKP2 (PDK2), and dephosphorylated by pyruvate dehydrogenase phosphatases PTC5 and PTC6.</text>
</comment>
<comment type="miscellaneous">
    <text evidence="2">Present with 100000 molecules/cell in log phase SD medium.</text>
</comment>
<comment type="sequence caution" evidence="5">
    <conflict type="erroneous initiation">
        <sequence resource="EMBL-CDS" id="AAB64705"/>
    </conflict>
    <text>Extended N-terminus.</text>
</comment>
<reference key="1">
    <citation type="journal article" date="1989" name="Biochem. Biophys. Res. Commun.">
        <title>Nucleotide and deduced amino acid sequence of the alpha subunit of yeast pyruvate dehydrogenase.</title>
        <authorList>
            <person name="Behal R.H."/>
            <person name="Browning K.S."/>
            <person name="Andreed L.J."/>
        </authorList>
    </citation>
    <scope>NUCLEOTIDE SEQUENCE [MRNA]</scope>
    <scope>PROTEIN SEQUENCE OF 34-53 AND 309-322</scope>
</reference>
<reference key="2">
    <citation type="journal article" date="1994" name="Yeast">
        <title>Promoter analysis of the PDA1 gene encoding the E1 alpha subunit of the pyruvate dehydrogenase complex from Saccharomyces cerevisiae.</title>
        <authorList>
            <person name="Wenzel T.J."/>
            <person name="Zuurmond A.M."/>
            <person name="Bergmans A."/>
            <person name="van den Berg J.A."/>
            <person name="Steensma H.Y."/>
        </authorList>
    </citation>
    <scope>NUCLEOTIDE SEQUENCE [GENOMIC DNA]</scope>
    <source>
        <strain>ATCC 26109 / X2180</strain>
    </source>
</reference>
<reference key="3">
    <citation type="journal article" date="1997" name="Nature">
        <title>The nucleotide sequence of Saccharomyces cerevisiae chromosome V.</title>
        <authorList>
            <person name="Dietrich F.S."/>
            <person name="Mulligan J.T."/>
            <person name="Hennessy K.M."/>
            <person name="Yelton M.A."/>
            <person name="Allen E."/>
            <person name="Araujo R."/>
            <person name="Aviles E."/>
            <person name="Berno A."/>
            <person name="Brennan T."/>
            <person name="Carpenter J."/>
            <person name="Chen E."/>
            <person name="Cherry J.M."/>
            <person name="Chung E."/>
            <person name="Duncan M."/>
            <person name="Guzman E."/>
            <person name="Hartzell G."/>
            <person name="Hunicke-Smith S."/>
            <person name="Hyman R.W."/>
            <person name="Kayser A."/>
            <person name="Komp C."/>
            <person name="Lashkari D."/>
            <person name="Lew H."/>
            <person name="Lin D."/>
            <person name="Mosedale D."/>
            <person name="Nakahara K."/>
            <person name="Namath A."/>
            <person name="Norgren R."/>
            <person name="Oefner P."/>
            <person name="Oh C."/>
            <person name="Petel F.X."/>
            <person name="Roberts D."/>
            <person name="Sehl P."/>
            <person name="Schramm S."/>
            <person name="Shogren T."/>
            <person name="Smith V."/>
            <person name="Taylor P."/>
            <person name="Wei Y."/>
            <person name="Botstein D."/>
            <person name="Davis R.W."/>
        </authorList>
    </citation>
    <scope>NUCLEOTIDE SEQUENCE [LARGE SCALE GENOMIC DNA]</scope>
    <source>
        <strain>ATCC 204508 / S288c</strain>
    </source>
</reference>
<reference key="4">
    <citation type="journal article" date="2014" name="G3 (Bethesda)">
        <title>The reference genome sequence of Saccharomyces cerevisiae: Then and now.</title>
        <authorList>
            <person name="Engel S.R."/>
            <person name="Dietrich F.S."/>
            <person name="Fisk D.G."/>
            <person name="Binkley G."/>
            <person name="Balakrishnan R."/>
            <person name="Costanzo M.C."/>
            <person name="Dwight S.S."/>
            <person name="Hitz B.C."/>
            <person name="Karra K."/>
            <person name="Nash R.S."/>
            <person name="Weng S."/>
            <person name="Wong E.D."/>
            <person name="Lloyd P."/>
            <person name="Skrzypek M.S."/>
            <person name="Miyasato S.R."/>
            <person name="Simison M."/>
            <person name="Cherry J.M."/>
        </authorList>
    </citation>
    <scope>GENOME REANNOTATION</scope>
    <source>
        <strain>ATCC 204508 / S288c</strain>
    </source>
</reference>
<reference key="5">
    <citation type="journal article" date="1992" name="Cell">
        <title>DMC1: a meiosis-specific yeast homolog of E. coli recA required for recombination, synaptonemal complex formation, and cell cycle progression.</title>
        <authorList>
            <person name="Bishop D.K."/>
            <person name="Park D."/>
            <person name="Xu L."/>
            <person name="Kleckner N."/>
        </authorList>
    </citation>
    <scope>NUCLEOTIDE SEQUENCE [GENOMIC DNA] OF 335-420</scope>
</reference>
<reference key="6">
    <citation type="journal article" date="1993" name="Mol. Gen. Genet.">
        <title>Isolation and characterization of a yeast gene that is homologous with a meiosis-specific cDNA from a plant.</title>
        <authorList>
            <person name="Kobayashi T."/>
            <person name="Hotta Y."/>
            <person name="Tabata S."/>
        </authorList>
    </citation>
    <scope>NUCLEOTIDE SEQUENCE [GENOMIC DNA] OF 357-420</scope>
    <source>
        <strain>SK1</strain>
    </source>
</reference>
<reference key="7">
    <citation type="journal article" date="2003" name="Nature">
        <title>Global analysis of protein expression in yeast.</title>
        <authorList>
            <person name="Ghaemmaghami S."/>
            <person name="Huh W.-K."/>
            <person name="Bower K."/>
            <person name="Howson R.W."/>
            <person name="Belle A."/>
            <person name="Dephoure N."/>
            <person name="O'Shea E.K."/>
            <person name="Weissman J.S."/>
        </authorList>
    </citation>
    <scope>LEVEL OF PROTEIN EXPRESSION [LARGE SCALE ANALYSIS]</scope>
</reference>
<reference key="8">
    <citation type="journal article" date="2005" name="Mol. Cell. Proteomics">
        <title>Quantitative phosphoproteomics applied to the yeast pheromone signaling pathway.</title>
        <authorList>
            <person name="Gruhler A."/>
            <person name="Olsen J.V."/>
            <person name="Mohammed S."/>
            <person name="Mortensen P."/>
            <person name="Faergeman N.J."/>
            <person name="Mann M."/>
            <person name="Jensen O.N."/>
        </authorList>
    </citation>
    <scope>PHOSPHORYLATION [LARGE SCALE ANALYSIS] AT SER-313</scope>
    <scope>IDENTIFICATION BY MASS SPECTROMETRY [LARGE SCALE ANALYSIS]</scope>
    <source>
        <strain>YAL6B</strain>
    </source>
</reference>
<reference key="9">
    <citation type="journal article" date="2007" name="J. Proteome Res.">
        <title>Large-scale phosphorylation analysis of alpha-factor-arrested Saccharomyces cerevisiae.</title>
        <authorList>
            <person name="Li X."/>
            <person name="Gerber S.A."/>
            <person name="Rudner A.D."/>
            <person name="Beausoleil S.A."/>
            <person name="Haas W."/>
            <person name="Villen J."/>
            <person name="Elias J.E."/>
            <person name="Gygi S.P."/>
        </authorList>
    </citation>
    <scope>PHOSPHORYLATION [LARGE SCALE ANALYSIS] AT SER-313</scope>
    <scope>IDENTIFICATION BY MASS SPECTROMETRY [LARGE SCALE ANALYSIS]</scope>
    <source>
        <strain>ADR376</strain>
    </source>
</reference>
<reference key="10">
    <citation type="journal article" date="2007" name="Mol. Cell. Proteomics">
        <title>Profiling phosphoproteins of yeast mitochondria reveals a role of phosphorylation in assembly of the ATP synthase.</title>
        <authorList>
            <person name="Reinders J."/>
            <person name="Wagner K."/>
            <person name="Zahedi R.P."/>
            <person name="Stojanovski D."/>
            <person name="Eyrich B."/>
            <person name="van der Laan M."/>
            <person name="Rehling P."/>
            <person name="Sickmann A."/>
            <person name="Pfanner N."/>
            <person name="Meisinger C."/>
        </authorList>
    </citation>
    <scope>PHOSPHORYLATION [LARGE SCALE ANALYSIS] AT SER-313</scope>
    <scope>IDENTIFICATION BY MASS SPECTROMETRY [LARGE SCALE ANALYSIS]</scope>
    <source>
        <strain>ATCC 76625 / YPH499</strain>
    </source>
</reference>
<reference key="11">
    <citation type="journal article" date="2008" name="J. Biol. Chem.">
        <title>Yeast pyruvate dehydrogenase complex is regulated by a concerted activity of two kinases and two phosphatases.</title>
        <authorList>
            <person name="Gey U."/>
            <person name="Czupalla C."/>
            <person name="Hoflack B."/>
            <person name="Rodel G."/>
            <person name="Krause-Buchholz U."/>
        </authorList>
    </citation>
    <scope>PHOSPHORYLATION AT SER-313 BY PKP1/PKP2</scope>
</reference>
<reference key="12">
    <citation type="journal article" date="2008" name="Mol. Cell. Proteomics">
        <title>A multidimensional chromatography technology for in-depth phosphoproteome analysis.</title>
        <authorList>
            <person name="Albuquerque C.P."/>
            <person name="Smolka M.B."/>
            <person name="Payne S.H."/>
            <person name="Bafna V."/>
            <person name="Eng J."/>
            <person name="Zhou H."/>
        </authorList>
    </citation>
    <scope>PHOSPHORYLATION [LARGE SCALE ANALYSIS] AT SER-313</scope>
    <scope>IDENTIFICATION BY MASS SPECTROMETRY [LARGE SCALE ANALYSIS]</scope>
</reference>
<reference key="13">
    <citation type="journal article" date="2009" name="Science">
        <title>Global analysis of Cdk1 substrate phosphorylation sites provides insights into evolution.</title>
        <authorList>
            <person name="Holt L.J."/>
            <person name="Tuch B.B."/>
            <person name="Villen J."/>
            <person name="Johnson A.D."/>
            <person name="Gygi S.P."/>
            <person name="Morgan D.O."/>
        </authorList>
    </citation>
    <scope>PHOSPHORYLATION [LARGE SCALE ANALYSIS] AT SER-313</scope>
    <scope>IDENTIFICATION BY MASS SPECTROMETRY [LARGE SCALE ANALYSIS]</scope>
</reference>
<reference key="14">
    <citation type="journal article" date="2012" name="Proc. Natl. Acad. Sci. U.S.A.">
        <title>N-terminal acetylome analyses and functional insights of the N-terminal acetyltransferase NatB.</title>
        <authorList>
            <person name="Van Damme P."/>
            <person name="Lasa M."/>
            <person name="Polevoda B."/>
            <person name="Gazquez C."/>
            <person name="Elosegui-Artola A."/>
            <person name="Kim D.S."/>
            <person name="De Juan-Pardo E."/>
            <person name="Demeyer K."/>
            <person name="Hole K."/>
            <person name="Larrea E."/>
            <person name="Timmerman E."/>
            <person name="Prieto J."/>
            <person name="Arnesen T."/>
            <person name="Sherman F."/>
            <person name="Gevaert K."/>
            <person name="Aldabe R."/>
        </authorList>
    </citation>
    <scope>IDENTIFICATION BY MASS SPECTROMETRY [LARGE SCALE ANALYSIS]</scope>
</reference>
<evidence type="ECO:0000250" key="1">
    <source>
        <dbReference type="UniProtKB" id="P08559"/>
    </source>
</evidence>
<evidence type="ECO:0000269" key="2">
    <source>
    </source>
</evidence>
<evidence type="ECO:0000269" key="3">
    <source>
    </source>
</evidence>
<evidence type="ECO:0000269" key="4">
    <source>
    </source>
</evidence>
<evidence type="ECO:0000305" key="5"/>
<evidence type="ECO:0007744" key="6">
    <source>
    </source>
</evidence>
<evidence type="ECO:0007744" key="7">
    <source>
    </source>
</evidence>
<evidence type="ECO:0007744" key="8">
    <source>
    </source>
</evidence>
<evidence type="ECO:0007744" key="9">
    <source>
    </source>
</evidence>
<evidence type="ECO:0007744" key="10">
    <source>
    </source>
</evidence>
<accession>P16387</accession>
<accession>D3DM87</accession>
<sequence>MLAASFKRQPSQLVRGLGAVLRTPTRIGHVRTMATLKTTDKKAPEDIEGSDTVQIELPESSFESYMLEPPDLSYETSKATLLQMYKDMVIIRRMEMACDALYKAKKIRGFCHLSVGQEAIAVGIENAITKLDSIITSYRCHGFTFMRGASVKAVLAELMGRRAGVSYGKGGSMHLYAPGFYGGNGIVGAQVPLGAGLAFAHQYKNEDACSFTLYGDGASNQGQVFESFNMAKLWNLPVVFCCENNKYGMGTAASRSSAMTEYFKRGQYIPGLKVNGMDILAVYQASKFAKDWCLSGKGPLVLEYETYRYGGHSMSDPGTTYRTRDEIQHMRSKNDPIAGLKMHLIDLGIATEAEVKAYDKSARKYVDEQVELADAAPPPEAKLSILFEDVYVKGTETPTLRGRIPEDTWDFKKQGFASRD</sequence>
<protein>
    <recommendedName>
        <fullName>Pyruvate dehydrogenase E1 component subunit alpha, mitochondrial</fullName>
        <ecNumber>1.2.4.1</ecNumber>
    </recommendedName>
    <alternativeName>
        <fullName>Pyruvate dehydrogenase complex component E1 alpha</fullName>
        <shortName>PDHE1-A</shortName>
    </alternativeName>
</protein>
<gene>
    <name type="primary">PDA1</name>
    <name type="ordered locus">YER178W</name>
</gene>
<dbReference type="EC" id="1.2.4.1"/>
<dbReference type="EMBL" id="M29582">
    <property type="protein sequence ID" value="AAA34847.1"/>
    <property type="molecule type" value="mRNA"/>
</dbReference>
<dbReference type="EMBL" id="X71664">
    <property type="protein sequence ID" value="CAA50657.1"/>
    <property type="molecule type" value="Genomic_DNA"/>
</dbReference>
<dbReference type="EMBL" id="U18922">
    <property type="protein sequence ID" value="AAB64705.1"/>
    <property type="status" value="ALT_INIT"/>
    <property type="molecule type" value="Genomic_DNA"/>
</dbReference>
<dbReference type="EMBL" id="M87549">
    <property type="protein sequence ID" value="AAA34572.1"/>
    <property type="molecule type" value="Genomic_DNA"/>
</dbReference>
<dbReference type="EMBL" id="D10865">
    <property type="protein sequence ID" value="BAA01636.1"/>
    <property type="molecule type" value="Genomic_DNA"/>
</dbReference>
<dbReference type="EMBL" id="BK006939">
    <property type="protein sequence ID" value="DAA07841.1"/>
    <property type="molecule type" value="Genomic_DNA"/>
</dbReference>
<dbReference type="PIR" id="A36743">
    <property type="entry name" value="DEBYPA"/>
</dbReference>
<dbReference type="RefSeq" id="NP_011105.4">
    <property type="nucleotide sequence ID" value="NM_001179068.3"/>
</dbReference>
<dbReference type="SMR" id="P16387"/>
<dbReference type="BioGRID" id="36931">
    <property type="interactions" value="608"/>
</dbReference>
<dbReference type="ComplexPortal" id="CPX-3207">
    <property type="entry name" value="Mitochondrial pyruvate dehydrogenase complex"/>
</dbReference>
<dbReference type="DIP" id="DIP-5117N"/>
<dbReference type="FunCoup" id="P16387">
    <property type="interactions" value="821"/>
</dbReference>
<dbReference type="IntAct" id="P16387">
    <property type="interactions" value="144"/>
</dbReference>
<dbReference type="MINT" id="P16387"/>
<dbReference type="STRING" id="4932.YER178W"/>
<dbReference type="iPTMnet" id="P16387"/>
<dbReference type="PaxDb" id="4932-YER178W"/>
<dbReference type="PeptideAtlas" id="P16387"/>
<dbReference type="EnsemblFungi" id="YER178W_mRNA">
    <property type="protein sequence ID" value="YER178W"/>
    <property type="gene ID" value="YER178W"/>
</dbReference>
<dbReference type="GeneID" id="856925"/>
<dbReference type="KEGG" id="sce:YER178W"/>
<dbReference type="AGR" id="SGD:S000000980"/>
<dbReference type="SGD" id="S000000980">
    <property type="gene designation" value="PDA1"/>
</dbReference>
<dbReference type="VEuPathDB" id="FungiDB:YER178W"/>
<dbReference type="eggNOG" id="KOG0225">
    <property type="taxonomic scope" value="Eukaryota"/>
</dbReference>
<dbReference type="GeneTree" id="ENSGT00530000063174"/>
<dbReference type="HOGENOM" id="CLU_029393_5_2_1"/>
<dbReference type="InParanoid" id="P16387"/>
<dbReference type="OMA" id="LGYEMPC"/>
<dbReference type="OrthoDB" id="10256198at2759"/>
<dbReference type="BioCyc" id="YEAST:YER178W-MONOMER"/>
<dbReference type="BRENDA" id="1.2.1.104">
    <property type="organism ID" value="984"/>
</dbReference>
<dbReference type="BRENDA" id="1.2.4.1">
    <property type="organism ID" value="984"/>
</dbReference>
<dbReference type="Reactome" id="R-SCE-9861559">
    <property type="pathway name" value="PDH complex synthesizes acetyl-CoA from PYR"/>
</dbReference>
<dbReference type="BioGRID-ORCS" id="856925">
    <property type="hits" value="9 hits in 10 CRISPR screens"/>
</dbReference>
<dbReference type="PRO" id="PR:P16387"/>
<dbReference type="Proteomes" id="UP000002311">
    <property type="component" value="Chromosome V"/>
</dbReference>
<dbReference type="RNAct" id="P16387">
    <property type="molecule type" value="protein"/>
</dbReference>
<dbReference type="GO" id="GO:0042645">
    <property type="term" value="C:mitochondrial nucleoid"/>
    <property type="evidence" value="ECO:0000314"/>
    <property type="project" value="SGD"/>
</dbReference>
<dbReference type="GO" id="GO:0005739">
    <property type="term" value="C:mitochondrion"/>
    <property type="evidence" value="ECO:0000314"/>
    <property type="project" value="ComplexPortal"/>
</dbReference>
<dbReference type="GO" id="GO:0045254">
    <property type="term" value="C:pyruvate dehydrogenase complex"/>
    <property type="evidence" value="ECO:0000314"/>
    <property type="project" value="SGD"/>
</dbReference>
<dbReference type="GO" id="GO:0046872">
    <property type="term" value="F:metal ion binding"/>
    <property type="evidence" value="ECO:0007669"/>
    <property type="project" value="UniProtKB-KW"/>
</dbReference>
<dbReference type="GO" id="GO:0004739">
    <property type="term" value="F:pyruvate dehydrogenase (acetyl-transferring) activity"/>
    <property type="evidence" value="ECO:0000315"/>
    <property type="project" value="SGD"/>
</dbReference>
<dbReference type="GO" id="GO:0007124">
    <property type="term" value="P:pseudohyphal growth"/>
    <property type="evidence" value="ECO:0000315"/>
    <property type="project" value="SGD"/>
</dbReference>
<dbReference type="GO" id="GO:0006086">
    <property type="term" value="P:pyruvate decarboxylation to acetyl-CoA"/>
    <property type="evidence" value="ECO:0000314"/>
    <property type="project" value="SGD"/>
</dbReference>
<dbReference type="CDD" id="cd02000">
    <property type="entry name" value="TPP_E1_PDC_ADC_BCADC"/>
    <property type="match status" value="1"/>
</dbReference>
<dbReference type="FunFam" id="3.40.50.970:FF:000013">
    <property type="entry name" value="Pyruvate dehydrogenase E1 component subunit alpha"/>
    <property type="match status" value="1"/>
</dbReference>
<dbReference type="Gene3D" id="3.40.50.970">
    <property type="match status" value="1"/>
</dbReference>
<dbReference type="InterPro" id="IPR001017">
    <property type="entry name" value="DH_E1"/>
</dbReference>
<dbReference type="InterPro" id="IPR050642">
    <property type="entry name" value="PDH_E1_Alpha_Subunit"/>
</dbReference>
<dbReference type="InterPro" id="IPR017597">
    <property type="entry name" value="Pyrv_DH_E1_asu_subgrp-y"/>
</dbReference>
<dbReference type="InterPro" id="IPR029061">
    <property type="entry name" value="THDP-binding"/>
</dbReference>
<dbReference type="NCBIfam" id="TIGR03182">
    <property type="entry name" value="PDH_E1_alph_y"/>
    <property type="match status" value="1"/>
</dbReference>
<dbReference type="PANTHER" id="PTHR11516:SF60">
    <property type="entry name" value="PYRUVATE DEHYDROGENASE E1 COMPONENT SUBUNIT ALPHA"/>
    <property type="match status" value="1"/>
</dbReference>
<dbReference type="PANTHER" id="PTHR11516">
    <property type="entry name" value="PYRUVATE DEHYDROGENASE E1 COMPONENT, ALPHA SUBUNIT BACTERIAL AND ORGANELLAR"/>
    <property type="match status" value="1"/>
</dbReference>
<dbReference type="Pfam" id="PF00676">
    <property type="entry name" value="E1_dh"/>
    <property type="match status" value="1"/>
</dbReference>
<dbReference type="SUPFAM" id="SSF52518">
    <property type="entry name" value="Thiamin diphosphate-binding fold (THDP-binding)"/>
    <property type="match status" value="1"/>
</dbReference>
<feature type="transit peptide" description="Mitochondrion" evidence="4">
    <location>
        <begin position="1"/>
        <end position="33"/>
    </location>
</feature>
<feature type="chain" id="PRO_0000020452" description="Pyruvate dehydrogenase E1 component subunit alpha, mitochondrial">
    <location>
        <begin position="34"/>
        <end position="420"/>
    </location>
</feature>
<feature type="binding site" evidence="1">
    <location>
        <position position="112"/>
    </location>
    <ligand>
        <name>pyruvate</name>
        <dbReference type="ChEBI" id="CHEBI:15361"/>
    </ligand>
</feature>
<feature type="binding site" evidence="1">
    <location>
        <position position="138"/>
    </location>
    <ligand>
        <name>pyruvate</name>
        <dbReference type="ChEBI" id="CHEBI:15361"/>
    </ligand>
</feature>
<feature type="binding site" evidence="1">
    <location>
        <position position="138"/>
    </location>
    <ligand>
        <name>thiamine diphosphate</name>
        <dbReference type="ChEBI" id="CHEBI:58937"/>
        <note>ligand shared with beta subunit</note>
    </ligand>
</feature>
<feature type="binding site" evidence="1">
    <location>
        <position position="139"/>
    </location>
    <ligand>
        <name>pyruvate</name>
        <dbReference type="ChEBI" id="CHEBI:15361"/>
    </ligand>
</feature>
<feature type="binding site" evidence="1">
    <location>
        <position position="139"/>
    </location>
    <ligand>
        <name>thiamine diphosphate</name>
        <dbReference type="ChEBI" id="CHEBI:58937"/>
        <note>ligand shared with beta subunit</note>
    </ligand>
</feature>
<feature type="binding site" evidence="1">
    <location>
        <position position="177"/>
    </location>
    <ligand>
        <name>pyruvate</name>
        <dbReference type="ChEBI" id="CHEBI:15361"/>
    </ligand>
</feature>
<feature type="binding site" evidence="1">
    <location>
        <position position="185"/>
    </location>
    <ligand>
        <name>pyruvate</name>
        <dbReference type="ChEBI" id="CHEBI:15361"/>
    </ligand>
</feature>
<feature type="binding site" evidence="1">
    <location>
        <position position="185"/>
    </location>
    <ligand>
        <name>thiamine diphosphate</name>
        <dbReference type="ChEBI" id="CHEBI:58937"/>
        <note>ligand shared with beta subunit</note>
    </ligand>
</feature>
<feature type="binding site" evidence="1">
    <location>
        <position position="187"/>
    </location>
    <ligand>
        <name>pyruvate</name>
        <dbReference type="ChEBI" id="CHEBI:15361"/>
    </ligand>
</feature>
<feature type="binding site" evidence="1">
    <location>
        <position position="187"/>
    </location>
    <ligand>
        <name>thiamine diphosphate</name>
        <dbReference type="ChEBI" id="CHEBI:58937"/>
        <note>ligand shared with beta subunit</note>
    </ligand>
</feature>
<feature type="binding site" evidence="1">
    <location>
        <position position="216"/>
    </location>
    <ligand>
        <name>Mg(2+)</name>
        <dbReference type="ChEBI" id="CHEBI:18420"/>
    </ligand>
</feature>
<feature type="binding site" evidence="1">
    <location>
        <position position="216"/>
    </location>
    <ligand>
        <name>pyruvate</name>
        <dbReference type="ChEBI" id="CHEBI:15361"/>
    </ligand>
</feature>
<feature type="binding site" evidence="1">
    <location>
        <position position="216"/>
    </location>
    <ligand>
        <name>thiamine diphosphate</name>
        <dbReference type="ChEBI" id="CHEBI:58937"/>
        <note>ligand shared with beta subunit</note>
    </ligand>
</feature>
<feature type="binding site" evidence="1">
    <location>
        <position position="217"/>
    </location>
    <ligand>
        <name>pyruvate</name>
        <dbReference type="ChEBI" id="CHEBI:15361"/>
    </ligand>
</feature>
<feature type="binding site" evidence="1">
    <location>
        <position position="217"/>
    </location>
    <ligand>
        <name>thiamine diphosphate</name>
        <dbReference type="ChEBI" id="CHEBI:58937"/>
        <note>ligand shared with beta subunit</note>
    </ligand>
</feature>
<feature type="binding site" evidence="1">
    <location>
        <position position="218"/>
    </location>
    <ligand>
        <name>pyruvate</name>
        <dbReference type="ChEBI" id="CHEBI:15361"/>
    </ligand>
</feature>
<feature type="binding site" evidence="1">
    <location>
        <position position="218"/>
    </location>
    <ligand>
        <name>thiamine diphosphate</name>
        <dbReference type="ChEBI" id="CHEBI:58937"/>
        <note>ligand shared with beta subunit</note>
    </ligand>
</feature>
<feature type="binding site" evidence="1">
    <location>
        <position position="245"/>
    </location>
    <ligand>
        <name>Mg(2+)</name>
        <dbReference type="ChEBI" id="CHEBI:18420"/>
    </ligand>
</feature>
<feature type="binding site" evidence="1">
    <location>
        <position position="245"/>
    </location>
    <ligand>
        <name>pyruvate</name>
        <dbReference type="ChEBI" id="CHEBI:15361"/>
    </ligand>
</feature>
<feature type="binding site" evidence="1">
    <location>
        <position position="245"/>
    </location>
    <ligand>
        <name>thiamine diphosphate</name>
        <dbReference type="ChEBI" id="CHEBI:58937"/>
        <note>ligand shared with beta subunit</note>
    </ligand>
</feature>
<feature type="binding site" evidence="1">
    <location>
        <position position="247"/>
    </location>
    <ligand>
        <name>Mg(2+)</name>
        <dbReference type="ChEBI" id="CHEBI:18420"/>
    </ligand>
</feature>
<feature type="binding site" evidence="1">
    <location>
        <position position="247"/>
    </location>
    <ligand>
        <name>pyruvate</name>
        <dbReference type="ChEBI" id="CHEBI:15361"/>
    </ligand>
</feature>
<feature type="binding site" evidence="1">
    <location>
        <position position="312"/>
    </location>
    <ligand>
        <name>thiamine diphosphate</name>
        <dbReference type="ChEBI" id="CHEBI:58937"/>
        <note>ligand shared with beta subunit</note>
    </ligand>
</feature>
<feature type="modified residue" description="Phosphoserine; by PDK1 and PDK2" evidence="3 6 7 8 9 10">
    <location>
        <position position="313"/>
    </location>
</feature>
<feature type="sequence conflict" description="In Ref. 1; AAA34847." evidence="5" ref="1">
    <original>T</original>
    <variation>S</variation>
    <location>
        <position position="76"/>
    </location>
</feature>
<proteinExistence type="evidence at protein level"/>
<keyword id="KW-0903">Direct protein sequencing</keyword>
<keyword id="KW-0460">Magnesium</keyword>
<keyword id="KW-0479">Metal-binding</keyword>
<keyword id="KW-0496">Mitochondrion</keyword>
<keyword id="KW-0560">Oxidoreductase</keyword>
<keyword id="KW-0597">Phosphoprotein</keyword>
<keyword id="KW-0670">Pyruvate</keyword>
<keyword id="KW-1185">Reference proteome</keyword>
<keyword id="KW-0786">Thiamine pyrophosphate</keyword>
<keyword id="KW-0809">Transit peptide</keyword>
<name>ODPA_YEAST</name>
<organism>
    <name type="scientific">Saccharomyces cerevisiae (strain ATCC 204508 / S288c)</name>
    <name type="common">Baker's yeast</name>
    <dbReference type="NCBI Taxonomy" id="559292"/>
    <lineage>
        <taxon>Eukaryota</taxon>
        <taxon>Fungi</taxon>
        <taxon>Dikarya</taxon>
        <taxon>Ascomycota</taxon>
        <taxon>Saccharomycotina</taxon>
        <taxon>Saccharomycetes</taxon>
        <taxon>Saccharomycetales</taxon>
        <taxon>Saccharomycetaceae</taxon>
        <taxon>Saccharomyces</taxon>
    </lineage>
</organism>